<evidence type="ECO:0000255" key="1">
    <source>
        <dbReference type="PROSITE-ProRule" id="PRU01182"/>
    </source>
</evidence>
<evidence type="ECO:0000305" key="2"/>
<gene>
    <name type="ordered locus">Mbur_0382</name>
</gene>
<reference key="1">
    <citation type="journal article" date="2009" name="ISME J.">
        <title>The genome sequence of the psychrophilic archaeon, Methanococcoides burtonii: the role of genome evolution in cold adaptation.</title>
        <authorList>
            <person name="Allen M.A."/>
            <person name="Lauro F.M."/>
            <person name="Williams T.J."/>
            <person name="Burg D."/>
            <person name="Siddiqui K.S."/>
            <person name="De Francisci D."/>
            <person name="Chong K.W."/>
            <person name="Pilak O."/>
            <person name="Chew H.H."/>
            <person name="De Maere M.Z."/>
            <person name="Ting L."/>
            <person name="Katrib M."/>
            <person name="Ng C."/>
            <person name="Sowers K.R."/>
            <person name="Galperin M.Y."/>
            <person name="Anderson I.J."/>
            <person name="Ivanova N."/>
            <person name="Dalin E."/>
            <person name="Martinez M."/>
            <person name="Lapidus A."/>
            <person name="Hauser L."/>
            <person name="Land M."/>
            <person name="Thomas T."/>
            <person name="Cavicchioli R."/>
        </authorList>
    </citation>
    <scope>NUCLEOTIDE SEQUENCE [LARGE SCALE GENOMIC DNA]</scope>
    <source>
        <strain>DSM 6242 / NBRC 107633 / OCM 468 / ACE-M</strain>
    </source>
</reference>
<dbReference type="EMBL" id="CP000300">
    <property type="protein sequence ID" value="ABE51377.1"/>
    <property type="molecule type" value="Genomic_DNA"/>
</dbReference>
<dbReference type="RefSeq" id="WP_011498539.1">
    <property type="nucleotide sequence ID" value="NC_007955.1"/>
</dbReference>
<dbReference type="SMR" id="Q12YU9"/>
<dbReference type="STRING" id="259564.Mbur_0382"/>
<dbReference type="GeneID" id="3997595"/>
<dbReference type="KEGG" id="mbu:Mbur_0382"/>
<dbReference type="HOGENOM" id="CLU_073529_0_2_2"/>
<dbReference type="OrthoDB" id="303892at2157"/>
<dbReference type="Proteomes" id="UP000001979">
    <property type="component" value="Chromosome"/>
</dbReference>
<dbReference type="GO" id="GO:0046872">
    <property type="term" value="F:metal ion binding"/>
    <property type="evidence" value="ECO:0007669"/>
    <property type="project" value="UniProtKB-KW"/>
</dbReference>
<dbReference type="GO" id="GO:0008237">
    <property type="term" value="F:metallopeptidase activity"/>
    <property type="evidence" value="ECO:0007669"/>
    <property type="project" value="UniProtKB-KW"/>
</dbReference>
<dbReference type="GO" id="GO:0006508">
    <property type="term" value="P:proteolysis"/>
    <property type="evidence" value="ECO:0007669"/>
    <property type="project" value="UniProtKB-KW"/>
</dbReference>
<dbReference type="CDD" id="cd08071">
    <property type="entry name" value="MPN_DUF2466"/>
    <property type="match status" value="1"/>
</dbReference>
<dbReference type="Gene3D" id="3.40.140.10">
    <property type="entry name" value="Cytidine Deaminase, domain 2"/>
    <property type="match status" value="1"/>
</dbReference>
<dbReference type="InterPro" id="IPR037518">
    <property type="entry name" value="MPN"/>
</dbReference>
<dbReference type="InterPro" id="IPR025657">
    <property type="entry name" value="RadC_JAB"/>
</dbReference>
<dbReference type="InterPro" id="IPR001405">
    <property type="entry name" value="UPF0758"/>
</dbReference>
<dbReference type="InterPro" id="IPR020891">
    <property type="entry name" value="UPF0758_CS"/>
</dbReference>
<dbReference type="InterPro" id="IPR046778">
    <property type="entry name" value="UPF0758_N"/>
</dbReference>
<dbReference type="NCBIfam" id="NF000642">
    <property type="entry name" value="PRK00024.1"/>
    <property type="match status" value="1"/>
</dbReference>
<dbReference type="NCBIfam" id="TIGR00608">
    <property type="entry name" value="radc"/>
    <property type="match status" value="1"/>
</dbReference>
<dbReference type="PANTHER" id="PTHR30471">
    <property type="entry name" value="DNA REPAIR PROTEIN RADC"/>
    <property type="match status" value="1"/>
</dbReference>
<dbReference type="PANTHER" id="PTHR30471:SF3">
    <property type="entry name" value="UPF0758 PROTEIN YEES-RELATED"/>
    <property type="match status" value="1"/>
</dbReference>
<dbReference type="Pfam" id="PF04002">
    <property type="entry name" value="RadC"/>
    <property type="match status" value="1"/>
</dbReference>
<dbReference type="Pfam" id="PF20582">
    <property type="entry name" value="UPF0758_N"/>
    <property type="match status" value="1"/>
</dbReference>
<dbReference type="PROSITE" id="PS50249">
    <property type="entry name" value="MPN"/>
    <property type="match status" value="1"/>
</dbReference>
<dbReference type="PROSITE" id="PS01302">
    <property type="entry name" value="UPF0758"/>
    <property type="match status" value="1"/>
</dbReference>
<protein>
    <recommendedName>
        <fullName>UPF0758 protein Mbur_0382</fullName>
    </recommendedName>
</protein>
<keyword id="KW-0378">Hydrolase</keyword>
<keyword id="KW-0479">Metal-binding</keyword>
<keyword id="KW-0482">Metalloprotease</keyword>
<keyword id="KW-0645">Protease</keyword>
<keyword id="KW-0862">Zinc</keyword>
<name>Y382_METBU</name>
<sequence length="229" mass="25508">MCGYQVRIHDMPSEDRPRERLLKHGPGFLSNAELLSVILRTGSKDENVVSMSSRILSEYNLKQLSQANISQLTKIRGIGPAKASQIAALFELARKLEIFTDDPKRKIRSANDVYSLLYPRHRELKKEHLTALYLDTKNNIIKEEVISIGSLNANIVHPREVFKSALMESSASVILTHNHPSGDPAPSREDIAVTEKLVEGGKILGISVLDHVIIGDGRYVSLKEEGYIS</sequence>
<organism>
    <name type="scientific">Methanococcoides burtonii (strain DSM 6242 / NBRC 107633 / OCM 468 / ACE-M)</name>
    <dbReference type="NCBI Taxonomy" id="259564"/>
    <lineage>
        <taxon>Archaea</taxon>
        <taxon>Methanobacteriati</taxon>
        <taxon>Methanobacteriota</taxon>
        <taxon>Stenosarchaea group</taxon>
        <taxon>Methanomicrobia</taxon>
        <taxon>Methanosarcinales</taxon>
        <taxon>Methanosarcinaceae</taxon>
        <taxon>Methanococcoides</taxon>
    </lineage>
</organism>
<accession>Q12YU9</accession>
<comment type="similarity">
    <text evidence="2">Belongs to the UPF0758 family.</text>
</comment>
<feature type="chain" id="PRO_1000001666" description="UPF0758 protein Mbur_0382">
    <location>
        <begin position="1"/>
        <end position="229"/>
    </location>
</feature>
<feature type="domain" description="MPN" evidence="1">
    <location>
        <begin position="106"/>
        <end position="228"/>
    </location>
</feature>
<feature type="short sequence motif" description="JAMM motif" evidence="1">
    <location>
        <begin position="177"/>
        <end position="190"/>
    </location>
</feature>
<feature type="binding site" evidence="1">
    <location>
        <position position="177"/>
    </location>
    <ligand>
        <name>Zn(2+)</name>
        <dbReference type="ChEBI" id="CHEBI:29105"/>
        <note>catalytic</note>
    </ligand>
</feature>
<feature type="binding site" evidence="1">
    <location>
        <position position="179"/>
    </location>
    <ligand>
        <name>Zn(2+)</name>
        <dbReference type="ChEBI" id="CHEBI:29105"/>
        <note>catalytic</note>
    </ligand>
</feature>
<feature type="binding site" evidence="1">
    <location>
        <position position="190"/>
    </location>
    <ligand>
        <name>Zn(2+)</name>
        <dbReference type="ChEBI" id="CHEBI:29105"/>
        <note>catalytic</note>
    </ligand>
</feature>
<proteinExistence type="inferred from homology"/>